<protein>
    <recommendedName>
        <fullName evidence="4">Protein CADMIUM TOLERANCE 5</fullName>
        <shortName evidence="4">Cd tolerant 5</shortName>
        <shortName evidence="4">OsCDT5</shortName>
    </recommendedName>
</protein>
<organism>
    <name type="scientific">Oryza sativa subsp. japonica</name>
    <name type="common">Rice</name>
    <dbReference type="NCBI Taxonomy" id="39947"/>
    <lineage>
        <taxon>Eukaryota</taxon>
        <taxon>Viridiplantae</taxon>
        <taxon>Streptophyta</taxon>
        <taxon>Embryophyta</taxon>
        <taxon>Tracheophyta</taxon>
        <taxon>Spermatophyta</taxon>
        <taxon>Magnoliopsida</taxon>
        <taxon>Liliopsida</taxon>
        <taxon>Poales</taxon>
        <taxon>Poaceae</taxon>
        <taxon>BOP clade</taxon>
        <taxon>Oryzoideae</taxon>
        <taxon>Oryzeae</taxon>
        <taxon>Oryzinae</taxon>
        <taxon>Oryza</taxon>
        <taxon>Oryza sativa</taxon>
    </lineage>
</organism>
<reference key="1">
    <citation type="journal article" date="2005" name="Nature">
        <title>The map-based sequence of the rice genome.</title>
        <authorList>
            <consortium name="International rice genome sequencing project (IRGSP)"/>
        </authorList>
    </citation>
    <scope>NUCLEOTIDE SEQUENCE [LARGE SCALE GENOMIC DNA]</scope>
    <source>
        <strain>cv. Nipponbare</strain>
    </source>
</reference>
<reference key="2">
    <citation type="journal article" date="2008" name="Nucleic Acids Res.">
        <title>The rice annotation project database (RAP-DB): 2008 update.</title>
        <authorList>
            <consortium name="The rice annotation project (RAP)"/>
        </authorList>
    </citation>
    <scope>GENOME REANNOTATION</scope>
    <source>
        <strain>cv. Nipponbare</strain>
    </source>
</reference>
<reference key="3">
    <citation type="journal article" date="2013" name="Rice">
        <title>Improvement of the Oryza sativa Nipponbare reference genome using next generation sequence and optical map data.</title>
        <authorList>
            <person name="Kawahara Y."/>
            <person name="de la Bastide M."/>
            <person name="Hamilton J.P."/>
            <person name="Kanamori H."/>
            <person name="McCombie W.R."/>
            <person name="Ouyang S."/>
            <person name="Schwartz D.C."/>
            <person name="Tanaka T."/>
            <person name="Wu J."/>
            <person name="Zhou S."/>
            <person name="Childs K.L."/>
            <person name="Davidson R.M."/>
            <person name="Lin H."/>
            <person name="Quesada-Ocampo L."/>
            <person name="Vaillancourt B."/>
            <person name="Sakai H."/>
            <person name="Lee S.S."/>
            <person name="Kim J."/>
            <person name="Numa H."/>
            <person name="Itoh T."/>
            <person name="Buell C.R."/>
            <person name="Matsumoto T."/>
        </authorList>
    </citation>
    <scope>GENOME REANNOTATION</scope>
    <source>
        <strain>cv. Nipponbare</strain>
    </source>
</reference>
<reference key="4">
    <citation type="journal article" date="2005" name="PLoS Biol.">
        <title>The genomes of Oryza sativa: a history of duplications.</title>
        <authorList>
            <person name="Yu J."/>
            <person name="Wang J."/>
            <person name="Lin W."/>
            <person name="Li S."/>
            <person name="Li H."/>
            <person name="Zhou J."/>
            <person name="Ni P."/>
            <person name="Dong W."/>
            <person name="Hu S."/>
            <person name="Zeng C."/>
            <person name="Zhang J."/>
            <person name="Zhang Y."/>
            <person name="Li R."/>
            <person name="Xu Z."/>
            <person name="Li S."/>
            <person name="Li X."/>
            <person name="Zheng H."/>
            <person name="Cong L."/>
            <person name="Lin L."/>
            <person name="Yin J."/>
            <person name="Geng J."/>
            <person name="Li G."/>
            <person name="Shi J."/>
            <person name="Liu J."/>
            <person name="Lv H."/>
            <person name="Li J."/>
            <person name="Wang J."/>
            <person name="Deng Y."/>
            <person name="Ran L."/>
            <person name="Shi X."/>
            <person name="Wang X."/>
            <person name="Wu Q."/>
            <person name="Li C."/>
            <person name="Ren X."/>
            <person name="Wang J."/>
            <person name="Wang X."/>
            <person name="Li D."/>
            <person name="Liu D."/>
            <person name="Zhang X."/>
            <person name="Ji Z."/>
            <person name="Zhao W."/>
            <person name="Sun Y."/>
            <person name="Zhang Z."/>
            <person name="Bao J."/>
            <person name="Han Y."/>
            <person name="Dong L."/>
            <person name="Ji J."/>
            <person name="Chen P."/>
            <person name="Wu S."/>
            <person name="Liu J."/>
            <person name="Xiao Y."/>
            <person name="Bu D."/>
            <person name="Tan J."/>
            <person name="Yang L."/>
            <person name="Ye C."/>
            <person name="Zhang J."/>
            <person name="Xu J."/>
            <person name="Zhou Y."/>
            <person name="Yu Y."/>
            <person name="Zhang B."/>
            <person name="Zhuang S."/>
            <person name="Wei H."/>
            <person name="Liu B."/>
            <person name="Lei M."/>
            <person name="Yu H."/>
            <person name="Li Y."/>
            <person name="Xu H."/>
            <person name="Wei S."/>
            <person name="He X."/>
            <person name="Fang L."/>
            <person name="Zhang Z."/>
            <person name="Zhang Y."/>
            <person name="Huang X."/>
            <person name="Su Z."/>
            <person name="Tong W."/>
            <person name="Li J."/>
            <person name="Tong Z."/>
            <person name="Li S."/>
            <person name="Ye J."/>
            <person name="Wang L."/>
            <person name="Fang L."/>
            <person name="Lei T."/>
            <person name="Chen C.-S."/>
            <person name="Chen H.-C."/>
            <person name="Xu Z."/>
            <person name="Li H."/>
            <person name="Huang H."/>
            <person name="Zhang F."/>
            <person name="Xu H."/>
            <person name="Li N."/>
            <person name="Zhao C."/>
            <person name="Li S."/>
            <person name="Dong L."/>
            <person name="Huang Y."/>
            <person name="Li L."/>
            <person name="Xi Y."/>
            <person name="Qi Q."/>
            <person name="Li W."/>
            <person name="Zhang B."/>
            <person name="Hu W."/>
            <person name="Zhang Y."/>
            <person name="Tian X."/>
            <person name="Jiao Y."/>
            <person name="Liang X."/>
            <person name="Jin J."/>
            <person name="Gao L."/>
            <person name="Zheng W."/>
            <person name="Hao B."/>
            <person name="Liu S.-M."/>
            <person name="Wang W."/>
            <person name="Yuan L."/>
            <person name="Cao M."/>
            <person name="McDermott J."/>
            <person name="Samudrala R."/>
            <person name="Wang J."/>
            <person name="Wong G.K.-S."/>
            <person name="Yang H."/>
        </authorList>
    </citation>
    <scope>NUCLEOTIDE SEQUENCE [LARGE SCALE GENOMIC DNA]</scope>
    <source>
        <strain>cv. Nipponbare</strain>
    </source>
</reference>
<reference key="5">
    <citation type="journal article" date="2009" name="Plant Cell Physiol.">
        <title>Novel cysteine-rich peptides from Digitaria ciliaris and Oryza sativa enhance tolerance to cadmium by limiting its cellular accumulation.</title>
        <authorList>
            <person name="Kuramata M."/>
            <person name="Masuya S."/>
            <person name="Takahashi Y."/>
            <person name="Kitagawa E."/>
            <person name="Inoue C."/>
            <person name="Ishikawa S."/>
            <person name="Youssefian S."/>
            <person name="Kusano T."/>
        </authorList>
    </citation>
    <scope>TISSUE SPECIFICITY</scope>
    <scope>INDUCTION BY CADMIUM</scope>
    <scope>GENE FAMILY</scope>
    <scope>NOMENCLATURE</scope>
</reference>
<reference key="6">
    <citation type="journal article" date="2009" name="Plant Signal. Behav.">
        <title>A novel plant cysteine-rich peptide family conferring cadmium tolerance to yeast and plants.</title>
        <authorList>
            <person name="Matsuda T."/>
            <person name="Kuramata M."/>
            <person name="Takahashi Y."/>
            <person name="Kitagawa E."/>
            <person name="Youssefian S."/>
            <person name="Kusano T."/>
        </authorList>
    </citation>
    <scope>GENE FAMILY</scope>
</reference>
<comment type="function">
    <text evidence="1">Confers resistance to heavy metal ions (e.g. cadmium (CdCl(2)) and copper (CuCl(2))) by chelating them at the plasma membrane of root cells, thus stopping their entry and reducing their accumulation.</text>
</comment>
<comment type="subcellular location">
    <subcellularLocation>
        <location evidence="1">Cell membrane</location>
        <topology evidence="2">Single-pass membrane protein</topology>
    </subcellularLocation>
    <subcellularLocation>
        <location evidence="1">Secreted</location>
        <location evidence="1">Cell wall</location>
    </subcellularLocation>
</comment>
<comment type="tissue specificity">
    <text evidence="3">Expressed in roots and shoots.</text>
</comment>
<comment type="induction">
    <text evidence="3">Down-regulated in root tissues but up-regulated in shoot tissues in response to cadmium (CdCl(2)).</text>
</comment>
<comment type="similarity">
    <text evidence="5">Belongs to the CYSTM1 family.</text>
</comment>
<proteinExistence type="evidence at transcript level"/>
<evidence type="ECO:0000250" key="1">
    <source>
        <dbReference type="UniProtKB" id="Q5VSB5"/>
    </source>
</evidence>
<evidence type="ECO:0000255" key="2"/>
<evidence type="ECO:0000269" key="3">
    <source>
    </source>
</evidence>
<evidence type="ECO:0000303" key="4">
    <source>
    </source>
</evidence>
<evidence type="ECO:0000305" key="5"/>
<evidence type="ECO:0000312" key="6">
    <source>
        <dbReference type="EMBL" id="BAS92536.1"/>
    </source>
</evidence>
<evidence type="ECO:0000312" key="7">
    <source>
        <dbReference type="EMBL" id="EEE62527.1"/>
    </source>
</evidence>
<dbReference type="EMBL" id="AP008211">
    <property type="protein sequence ID" value="BAH92971.1"/>
    <property type="molecule type" value="Genomic_DNA"/>
</dbReference>
<dbReference type="EMBL" id="AP014961">
    <property type="protein sequence ID" value="BAS92536.1"/>
    <property type="molecule type" value="Genomic_DNA"/>
</dbReference>
<dbReference type="EMBL" id="CM000142">
    <property type="protein sequence ID" value="EEE62527.1"/>
    <property type="molecule type" value="Genomic_DNA"/>
</dbReference>
<dbReference type="FunCoup" id="B9FMS2">
    <property type="interactions" value="1"/>
</dbReference>
<dbReference type="STRING" id="39947.B9FMS2"/>
<dbReference type="PaxDb" id="39947-B9FMS2"/>
<dbReference type="EnsemblPlants" id="Os05t0178300-01">
    <property type="protein sequence ID" value="Os05t0178300-01"/>
    <property type="gene ID" value="Os05g0178300"/>
</dbReference>
<dbReference type="Gramene" id="Os05t0178300-01">
    <property type="protein sequence ID" value="Os05t0178300-01"/>
    <property type="gene ID" value="Os05g0178300"/>
</dbReference>
<dbReference type="KEGG" id="dosa:Os05g0178300"/>
<dbReference type="eggNOG" id="ENOG502S75V">
    <property type="taxonomic scope" value="Eukaryota"/>
</dbReference>
<dbReference type="HOGENOM" id="CLU_156676_2_0_1"/>
<dbReference type="InParanoid" id="B9FMS2"/>
<dbReference type="OMA" id="CLDMLCC"/>
<dbReference type="Proteomes" id="UP000000763">
    <property type="component" value="Chromosome 5"/>
</dbReference>
<dbReference type="Proteomes" id="UP000007752">
    <property type="component" value="Chromosome 5"/>
</dbReference>
<dbReference type="Proteomes" id="UP000059680">
    <property type="component" value="Chromosome 5"/>
</dbReference>
<dbReference type="GO" id="GO:0005576">
    <property type="term" value="C:extracellular region"/>
    <property type="evidence" value="ECO:0007669"/>
    <property type="project" value="UniProtKB-KW"/>
</dbReference>
<dbReference type="GO" id="GO:0009505">
    <property type="term" value="C:plant-type cell wall"/>
    <property type="evidence" value="ECO:0000250"/>
    <property type="project" value="UniProtKB"/>
</dbReference>
<dbReference type="GO" id="GO:0005886">
    <property type="term" value="C:plasma membrane"/>
    <property type="evidence" value="ECO:0000250"/>
    <property type="project" value="UniProtKB"/>
</dbReference>
<dbReference type="GO" id="GO:0046872">
    <property type="term" value="F:metal ion binding"/>
    <property type="evidence" value="ECO:0000250"/>
    <property type="project" value="UniProtKB"/>
</dbReference>
<dbReference type="GO" id="GO:0140487">
    <property type="term" value="F:metal ion sequestering activity"/>
    <property type="evidence" value="ECO:0000250"/>
    <property type="project" value="UniProtKB"/>
</dbReference>
<dbReference type="GO" id="GO:1990748">
    <property type="term" value="P:cellular detoxification"/>
    <property type="evidence" value="ECO:0000250"/>
    <property type="project" value="UniProtKB"/>
</dbReference>
<dbReference type="GO" id="GO:0071585">
    <property type="term" value="P:detoxification of cadmium ion"/>
    <property type="evidence" value="ECO:0000250"/>
    <property type="project" value="UniProtKB"/>
</dbReference>
<dbReference type="GO" id="GO:0010273">
    <property type="term" value="P:detoxification of copper ion"/>
    <property type="evidence" value="ECO:0000250"/>
    <property type="project" value="UniProtKB"/>
</dbReference>
<dbReference type="GO" id="GO:0046686">
    <property type="term" value="P:response to cadmium ion"/>
    <property type="evidence" value="ECO:0000270"/>
    <property type="project" value="UniProtKB"/>
</dbReference>
<dbReference type="InterPro" id="IPR051671">
    <property type="entry name" value="CYSTM1_HM_Tolerance"/>
</dbReference>
<dbReference type="InterPro" id="IPR028144">
    <property type="entry name" value="CYSTM_dom"/>
</dbReference>
<dbReference type="PANTHER" id="PTHR35470">
    <property type="entry name" value="CADMIUM TOLERANT 3"/>
    <property type="match status" value="1"/>
</dbReference>
<dbReference type="PANTHER" id="PTHR35470:SF6">
    <property type="entry name" value="PROTEIN CYSTEINE-RICH TRANSMEMBRANE MODULE 2"/>
    <property type="match status" value="1"/>
</dbReference>
<dbReference type="Pfam" id="PF12734">
    <property type="entry name" value="CYSTM"/>
    <property type="match status" value="1"/>
</dbReference>
<sequence>MYNPPSAQEMTYKDHVQRRHEEKGCLYACLFTLCCCFCCYETCECCLETLCCCC</sequence>
<keyword id="KW-1003">Cell membrane</keyword>
<keyword id="KW-0134">Cell wall</keyword>
<keyword id="KW-0472">Membrane</keyword>
<keyword id="KW-0479">Metal-binding</keyword>
<keyword id="KW-1185">Reference proteome</keyword>
<keyword id="KW-0964">Secreted</keyword>
<keyword id="KW-0346">Stress response</keyword>
<keyword id="KW-0812">Transmembrane</keyword>
<keyword id="KW-1133">Transmembrane helix</keyword>
<name>CDT5_ORYSJ</name>
<accession>B9FMS2</accession>
<accession>A0A0P0WIM4</accession>
<feature type="chain" id="PRO_0000454819" description="Protein CADMIUM TOLERANCE 5">
    <location>
        <begin position="1"/>
        <end position="54"/>
    </location>
</feature>
<feature type="transmembrane region" description="Helical" evidence="2">
    <location>
        <begin position="24"/>
        <end position="40"/>
    </location>
</feature>
<gene>
    <name evidence="4" type="primary">CDT5</name>
    <name evidence="6" type="ordered locus">Os05g0178300</name>
    <name evidence="7" type="ORF">OsJ_17325</name>
    <name evidence="6" type="ORF">OSNPB_050178300</name>
</gene>